<keyword id="KW-1003">Cell membrane</keyword>
<keyword id="KW-0472">Membrane</keyword>
<keyword id="KW-0592">Phosphate transport</keyword>
<keyword id="KW-0597">Phosphoprotein</keyword>
<keyword id="KW-0675">Receptor</keyword>
<keyword id="KW-1185">Reference proteome</keyword>
<keyword id="KW-0769">Symport</keyword>
<keyword id="KW-0812">Transmembrane</keyword>
<keyword id="KW-1133">Transmembrane helix</keyword>
<keyword id="KW-0813">Transport</keyword>
<accession>Q5R9L5</accession>
<accession>Q5R7T0</accession>
<proteinExistence type="evidence at transcript level"/>
<gene>
    <name type="primary">SLC20A1</name>
</gene>
<comment type="function">
    <text evidence="2">Sodium-phosphate symporter which preferentially transports the monovalent form of phosphate with a stoichiometry of two sodium ions per phosphate ion. May play a role in extracellular matrix and cartilage calcification as well as in vascular calcification (By similarity). Essential for cell proliferation but this function is independent of its phosphate transporter activity (By similarity).</text>
</comment>
<comment type="catalytic activity">
    <reaction evidence="2">
        <text>2 Na(+)(out) + phosphate(out) = 2 Na(+)(in) + phosphate(in)</text>
        <dbReference type="Rhea" id="RHEA:71259"/>
        <dbReference type="ChEBI" id="CHEBI:29101"/>
        <dbReference type="ChEBI" id="CHEBI:43474"/>
    </reaction>
</comment>
<comment type="subcellular location">
    <subcellularLocation>
        <location evidence="2">Cell membrane</location>
        <topology evidence="3">Multi-pass membrane protein</topology>
    </subcellularLocation>
</comment>
<comment type="similarity">
    <text evidence="5">Belongs to the inorganic phosphate transporter (PiT) (TC 2.A.20) family.</text>
</comment>
<dbReference type="EMBL" id="CR859372">
    <property type="protein sequence ID" value="CAH91545.1"/>
    <property type="molecule type" value="mRNA"/>
</dbReference>
<dbReference type="EMBL" id="CR860029">
    <property type="protein sequence ID" value="CAH92180.1"/>
    <property type="molecule type" value="mRNA"/>
</dbReference>
<dbReference type="RefSeq" id="NP_001126276.1">
    <property type="nucleotide sequence ID" value="NM_001132804.1"/>
</dbReference>
<dbReference type="SMR" id="Q5R9L5"/>
<dbReference type="FunCoup" id="Q5R9L5">
    <property type="interactions" value="850"/>
</dbReference>
<dbReference type="STRING" id="9601.ENSPPYP00000013569"/>
<dbReference type="GeneID" id="100173250"/>
<dbReference type="KEGG" id="pon:100173250"/>
<dbReference type="CTD" id="6574"/>
<dbReference type="eggNOG" id="KOG2493">
    <property type="taxonomic scope" value="Eukaryota"/>
</dbReference>
<dbReference type="InParanoid" id="Q5R9L5"/>
<dbReference type="OrthoDB" id="260807at2759"/>
<dbReference type="Proteomes" id="UP000001595">
    <property type="component" value="Unplaced"/>
</dbReference>
<dbReference type="GO" id="GO:0005886">
    <property type="term" value="C:plasma membrane"/>
    <property type="evidence" value="ECO:0000250"/>
    <property type="project" value="UniProtKB"/>
</dbReference>
<dbReference type="GO" id="GO:0005436">
    <property type="term" value="F:sodium:phosphate symporter activity"/>
    <property type="evidence" value="ECO:0000250"/>
    <property type="project" value="UniProtKB"/>
</dbReference>
<dbReference type="GO" id="GO:0008283">
    <property type="term" value="P:cell population proliferation"/>
    <property type="evidence" value="ECO:0000250"/>
    <property type="project" value="UniProtKB"/>
</dbReference>
<dbReference type="GO" id="GO:0035435">
    <property type="term" value="P:phosphate ion transmembrane transport"/>
    <property type="evidence" value="ECO:0007669"/>
    <property type="project" value="TreeGrafter"/>
</dbReference>
<dbReference type="InterPro" id="IPR001204">
    <property type="entry name" value="Phos_transporter"/>
</dbReference>
<dbReference type="PANTHER" id="PTHR11101">
    <property type="entry name" value="PHOSPHATE TRANSPORTER"/>
    <property type="match status" value="1"/>
</dbReference>
<dbReference type="PANTHER" id="PTHR11101:SF46">
    <property type="entry name" value="SODIUM-DEPENDENT PHOSPHATE TRANSPORTER 1"/>
    <property type="match status" value="1"/>
</dbReference>
<dbReference type="Pfam" id="PF01384">
    <property type="entry name" value="PHO4"/>
    <property type="match status" value="1"/>
</dbReference>
<sequence length="679" mass="73687">MAALITSTTAATAASGPLVDYLWMLILGFIIAFVLAFSVGANDVANSFGTAVGSGVVTLKQACILASIFETVGSVLLGAKVSETIRKGLIDVEMYNSTQGLLMAGSVSAMFGSAVWQLVASFLKLPISGTHCIVGATIGFSLVAKGQEGVKWSELIKIVMSWFVSPLLSGIMSGILFFLVRAFILHKADPVPNGLRALPVFYACTVGINLFSIMYTGAPLLGFDKLPLWGTILISVGCAVFCALIVWFFVCPRMKRKIEREIKCSPSESPLMEKKNSLKEDHEETKLSVSDIENRNPVSEVGPATVPLQAVVEERTVSFKLGDLEEAPERERLPSVDLKEETSIDSTVNGAVQLPNGNLVQFSQAVSNQINSSGHYQYHTVHKDSGLYKELLHKLHLAKVGDCMGDSGDKPLRRNNSYTSYTMAICGMPLDSFRAKEGEQKGEEVEKLTWPNADSKKRIRMDSYTSYCNAVSDLHSASEIDMSVKAEMGLGDRKGSNGSLEEWYDQDKPEVSLLFQFLQILTACFGSFAHGGNDVSNAIGPLVALYLVYDTGDVSSKVATPIWLLLYGGVGICIGLWVWGRRVIQTMGKDLTPITPSSGFSIELASALTVVIASNIGLPISTTHCKVGSVVSVGWLRSKKAVDWRLFRNIFMAWFVTVPISGVISAAIMAIFRYVILRM</sequence>
<reference key="1">
    <citation type="submission" date="2004-11" db="EMBL/GenBank/DDBJ databases">
        <authorList>
            <consortium name="The German cDNA consortium"/>
        </authorList>
    </citation>
    <scope>NUCLEOTIDE SEQUENCE [LARGE SCALE MRNA]</scope>
    <source>
        <tissue>Brain cortex</tissue>
    </source>
</reference>
<name>S20A1_PONAB</name>
<organism>
    <name type="scientific">Pongo abelii</name>
    <name type="common">Sumatran orangutan</name>
    <name type="synonym">Pongo pygmaeus abelii</name>
    <dbReference type="NCBI Taxonomy" id="9601"/>
    <lineage>
        <taxon>Eukaryota</taxon>
        <taxon>Metazoa</taxon>
        <taxon>Chordata</taxon>
        <taxon>Craniata</taxon>
        <taxon>Vertebrata</taxon>
        <taxon>Euteleostomi</taxon>
        <taxon>Mammalia</taxon>
        <taxon>Eutheria</taxon>
        <taxon>Euarchontoglires</taxon>
        <taxon>Primates</taxon>
        <taxon>Haplorrhini</taxon>
        <taxon>Catarrhini</taxon>
        <taxon>Hominidae</taxon>
        <taxon>Pongo</taxon>
    </lineage>
</organism>
<evidence type="ECO:0000250" key="1"/>
<evidence type="ECO:0000250" key="2">
    <source>
        <dbReference type="UniProtKB" id="Q8WUM9"/>
    </source>
</evidence>
<evidence type="ECO:0000255" key="3"/>
<evidence type="ECO:0000256" key="4">
    <source>
        <dbReference type="SAM" id="MobiDB-lite"/>
    </source>
</evidence>
<evidence type="ECO:0000305" key="5"/>
<protein>
    <recommendedName>
        <fullName>Sodium-dependent phosphate transporter 1</fullName>
    </recommendedName>
    <alternativeName>
        <fullName>Solute carrier family 20 member 1</fullName>
    </alternativeName>
</protein>
<feature type="chain" id="PRO_0000080773" description="Sodium-dependent phosphate transporter 1">
    <location>
        <begin position="1"/>
        <end position="679"/>
    </location>
</feature>
<feature type="transmembrane region" description="Helical" evidence="3">
    <location>
        <begin position="21"/>
        <end position="41"/>
    </location>
</feature>
<feature type="transmembrane region" description="Helical" evidence="3">
    <location>
        <begin position="62"/>
        <end position="82"/>
    </location>
</feature>
<feature type="transmembrane region" description="Helical" evidence="3">
    <location>
        <begin position="100"/>
        <end position="120"/>
    </location>
</feature>
<feature type="transmembrane region" description="Helical" evidence="3">
    <location>
        <begin position="158"/>
        <end position="178"/>
    </location>
</feature>
<feature type="transmembrane region" description="Helical" evidence="3">
    <location>
        <begin position="203"/>
        <end position="223"/>
    </location>
</feature>
<feature type="transmembrane region" description="Helical" evidence="3">
    <location>
        <begin position="230"/>
        <end position="250"/>
    </location>
</feature>
<feature type="transmembrane region" description="Helical" evidence="3">
    <location>
        <begin position="511"/>
        <end position="531"/>
    </location>
</feature>
<feature type="transmembrane region" description="Helical" evidence="3">
    <location>
        <begin position="558"/>
        <end position="578"/>
    </location>
</feature>
<feature type="transmembrane region" description="Helical" evidence="3">
    <location>
        <begin position="600"/>
        <end position="620"/>
    </location>
</feature>
<feature type="transmembrane region" description="Helical" evidence="3">
    <location>
        <begin position="650"/>
        <end position="670"/>
    </location>
</feature>
<feature type="region of interest" description="Disordered" evidence="4">
    <location>
        <begin position="268"/>
        <end position="288"/>
    </location>
</feature>
<feature type="region of interest" description="A" evidence="1">
    <location>
        <begin position="550"/>
        <end position="558"/>
    </location>
</feature>
<feature type="compositionally biased region" description="Basic and acidic residues" evidence="4">
    <location>
        <begin position="271"/>
        <end position="286"/>
    </location>
</feature>
<feature type="modified residue" description="Phosphoserine" evidence="2">
    <location>
        <position position="265"/>
    </location>
</feature>
<feature type="modified residue" description="Phosphoserine" evidence="2">
    <location>
        <position position="269"/>
    </location>
</feature>
<feature type="sequence conflict" description="In Ref. 1; CAH92180." evidence="5" ref="1">
    <original>D</original>
    <variation>N</variation>
    <location>
        <position position="189"/>
    </location>
</feature>
<feature type="sequence conflict" description="In Ref. 1; CAH92180." evidence="5" ref="1">
    <original>L</original>
    <variation>P</variation>
    <location>
        <position position="397"/>
    </location>
</feature>